<name>AROK_SYNJA</name>
<comment type="function">
    <text evidence="1">Catalyzes the specific phosphorylation of the 3-hydroxyl group of shikimic acid using ATP as a cosubstrate.</text>
</comment>
<comment type="catalytic activity">
    <reaction evidence="1">
        <text>shikimate + ATP = 3-phosphoshikimate + ADP + H(+)</text>
        <dbReference type="Rhea" id="RHEA:13121"/>
        <dbReference type="ChEBI" id="CHEBI:15378"/>
        <dbReference type="ChEBI" id="CHEBI:30616"/>
        <dbReference type="ChEBI" id="CHEBI:36208"/>
        <dbReference type="ChEBI" id="CHEBI:145989"/>
        <dbReference type="ChEBI" id="CHEBI:456216"/>
        <dbReference type="EC" id="2.7.1.71"/>
    </reaction>
</comment>
<comment type="cofactor">
    <cofactor evidence="1">
        <name>Mg(2+)</name>
        <dbReference type="ChEBI" id="CHEBI:18420"/>
    </cofactor>
    <text evidence="1">Binds 1 Mg(2+) ion per subunit.</text>
</comment>
<comment type="pathway">
    <text evidence="1">Metabolic intermediate biosynthesis; chorismate biosynthesis; chorismate from D-erythrose 4-phosphate and phosphoenolpyruvate: step 5/7.</text>
</comment>
<comment type="subunit">
    <text evidence="1">Monomer.</text>
</comment>
<comment type="subcellular location">
    <subcellularLocation>
        <location evidence="1">Cytoplasm</location>
    </subcellularLocation>
</comment>
<comment type="similarity">
    <text evidence="1">Belongs to the shikimate kinase family.</text>
</comment>
<gene>
    <name evidence="1" type="primary">aroK</name>
    <name type="ordered locus">CYA_2646</name>
</gene>
<reference key="1">
    <citation type="journal article" date="2007" name="ISME J.">
        <title>Population level functional diversity in a microbial community revealed by comparative genomic and metagenomic analyses.</title>
        <authorList>
            <person name="Bhaya D."/>
            <person name="Grossman A.R."/>
            <person name="Steunou A.-S."/>
            <person name="Khuri N."/>
            <person name="Cohan F.M."/>
            <person name="Hamamura N."/>
            <person name="Melendrez M.C."/>
            <person name="Bateson M.M."/>
            <person name="Ward D.M."/>
            <person name="Heidelberg J.F."/>
        </authorList>
    </citation>
    <scope>NUCLEOTIDE SEQUENCE [LARGE SCALE GENOMIC DNA]</scope>
    <source>
        <strain>JA-3-3Ab</strain>
    </source>
</reference>
<feature type="chain" id="PRO_0000237945" description="Shikimate kinase">
    <location>
        <begin position="1"/>
        <end position="189"/>
    </location>
</feature>
<feature type="binding site" evidence="1">
    <location>
        <begin position="22"/>
        <end position="27"/>
    </location>
    <ligand>
        <name>ATP</name>
        <dbReference type="ChEBI" id="CHEBI:30616"/>
    </ligand>
</feature>
<feature type="binding site" evidence="1">
    <location>
        <position position="26"/>
    </location>
    <ligand>
        <name>Mg(2+)</name>
        <dbReference type="ChEBI" id="CHEBI:18420"/>
    </ligand>
</feature>
<feature type="binding site" evidence="1">
    <location>
        <position position="44"/>
    </location>
    <ligand>
        <name>substrate</name>
    </ligand>
</feature>
<feature type="binding site" evidence="1">
    <location>
        <position position="68"/>
    </location>
    <ligand>
        <name>substrate</name>
    </ligand>
</feature>
<feature type="binding site" evidence="1">
    <location>
        <position position="90"/>
    </location>
    <ligand>
        <name>substrate</name>
    </ligand>
</feature>
<feature type="binding site" evidence="1">
    <location>
        <position position="128"/>
    </location>
    <ligand>
        <name>ATP</name>
        <dbReference type="ChEBI" id="CHEBI:30616"/>
    </ligand>
</feature>
<feature type="binding site" evidence="1">
    <location>
        <position position="147"/>
    </location>
    <ligand>
        <name>substrate</name>
    </ligand>
</feature>
<sequence length="189" mass="21122">MIQPEEAERLRGVTVYLIGMMASGKSTLGAELAAQLRRPFFDTDALVEQVAGCSIAQIFAEQGEAHFRELETQVLAQLSGYTRLVVATGGGIVLRPKNWSYLHHGLTVWLDAAPELIWQRLKRDPGQRPLLQTPDPQAALQRLMQEREPFYAQADVRVPIHSEASPSQLAEQVWQAICARLRAQPPCNR</sequence>
<organism>
    <name type="scientific">Synechococcus sp. (strain JA-3-3Ab)</name>
    <name type="common">Cyanobacteria bacterium Yellowstone A-Prime</name>
    <dbReference type="NCBI Taxonomy" id="321327"/>
    <lineage>
        <taxon>Bacteria</taxon>
        <taxon>Bacillati</taxon>
        <taxon>Cyanobacteriota</taxon>
        <taxon>Cyanophyceae</taxon>
        <taxon>Synechococcales</taxon>
        <taxon>Synechococcaceae</taxon>
        <taxon>Synechococcus</taxon>
    </lineage>
</organism>
<proteinExistence type="inferred from homology"/>
<evidence type="ECO:0000255" key="1">
    <source>
        <dbReference type="HAMAP-Rule" id="MF_00109"/>
    </source>
</evidence>
<keyword id="KW-0028">Amino-acid biosynthesis</keyword>
<keyword id="KW-0057">Aromatic amino acid biosynthesis</keyword>
<keyword id="KW-0067">ATP-binding</keyword>
<keyword id="KW-0963">Cytoplasm</keyword>
<keyword id="KW-0418">Kinase</keyword>
<keyword id="KW-0460">Magnesium</keyword>
<keyword id="KW-0479">Metal-binding</keyword>
<keyword id="KW-0547">Nucleotide-binding</keyword>
<keyword id="KW-0808">Transferase</keyword>
<accession>Q2JRJ6</accession>
<dbReference type="EC" id="2.7.1.71" evidence="1"/>
<dbReference type="EMBL" id="CP000239">
    <property type="protein sequence ID" value="ABD00758.1"/>
    <property type="molecule type" value="Genomic_DNA"/>
</dbReference>
<dbReference type="RefSeq" id="WP_011431430.1">
    <property type="nucleotide sequence ID" value="NC_007775.1"/>
</dbReference>
<dbReference type="SMR" id="Q2JRJ6"/>
<dbReference type="STRING" id="321327.CYA_2646"/>
<dbReference type="KEGG" id="cya:CYA_2646"/>
<dbReference type="eggNOG" id="COG0703">
    <property type="taxonomic scope" value="Bacteria"/>
</dbReference>
<dbReference type="HOGENOM" id="CLU_057607_2_3_3"/>
<dbReference type="OrthoDB" id="9800332at2"/>
<dbReference type="UniPathway" id="UPA00053">
    <property type="reaction ID" value="UER00088"/>
</dbReference>
<dbReference type="Proteomes" id="UP000008818">
    <property type="component" value="Chromosome"/>
</dbReference>
<dbReference type="GO" id="GO:0005829">
    <property type="term" value="C:cytosol"/>
    <property type="evidence" value="ECO:0007669"/>
    <property type="project" value="TreeGrafter"/>
</dbReference>
<dbReference type="GO" id="GO:0005524">
    <property type="term" value="F:ATP binding"/>
    <property type="evidence" value="ECO:0007669"/>
    <property type="project" value="UniProtKB-UniRule"/>
</dbReference>
<dbReference type="GO" id="GO:0000287">
    <property type="term" value="F:magnesium ion binding"/>
    <property type="evidence" value="ECO:0007669"/>
    <property type="project" value="UniProtKB-UniRule"/>
</dbReference>
<dbReference type="GO" id="GO:0004765">
    <property type="term" value="F:shikimate kinase activity"/>
    <property type="evidence" value="ECO:0007669"/>
    <property type="project" value="UniProtKB-UniRule"/>
</dbReference>
<dbReference type="GO" id="GO:0008652">
    <property type="term" value="P:amino acid biosynthetic process"/>
    <property type="evidence" value="ECO:0007669"/>
    <property type="project" value="UniProtKB-KW"/>
</dbReference>
<dbReference type="GO" id="GO:0009073">
    <property type="term" value="P:aromatic amino acid family biosynthetic process"/>
    <property type="evidence" value="ECO:0007669"/>
    <property type="project" value="UniProtKB-KW"/>
</dbReference>
<dbReference type="GO" id="GO:0009423">
    <property type="term" value="P:chorismate biosynthetic process"/>
    <property type="evidence" value="ECO:0007669"/>
    <property type="project" value="UniProtKB-UniRule"/>
</dbReference>
<dbReference type="CDD" id="cd00464">
    <property type="entry name" value="SK"/>
    <property type="match status" value="1"/>
</dbReference>
<dbReference type="Gene3D" id="3.40.50.300">
    <property type="entry name" value="P-loop containing nucleotide triphosphate hydrolases"/>
    <property type="match status" value="1"/>
</dbReference>
<dbReference type="HAMAP" id="MF_00109">
    <property type="entry name" value="Shikimate_kinase"/>
    <property type="match status" value="1"/>
</dbReference>
<dbReference type="InterPro" id="IPR027417">
    <property type="entry name" value="P-loop_NTPase"/>
</dbReference>
<dbReference type="InterPro" id="IPR031322">
    <property type="entry name" value="Shikimate/glucono_kinase"/>
</dbReference>
<dbReference type="InterPro" id="IPR000623">
    <property type="entry name" value="Shikimate_kinase/TSH1"/>
</dbReference>
<dbReference type="InterPro" id="IPR023000">
    <property type="entry name" value="Shikimate_kinase_CS"/>
</dbReference>
<dbReference type="PANTHER" id="PTHR21087">
    <property type="entry name" value="SHIKIMATE KINASE"/>
    <property type="match status" value="1"/>
</dbReference>
<dbReference type="PANTHER" id="PTHR21087:SF16">
    <property type="entry name" value="SHIKIMATE KINASE 1, CHLOROPLASTIC"/>
    <property type="match status" value="1"/>
</dbReference>
<dbReference type="Pfam" id="PF01202">
    <property type="entry name" value="SKI"/>
    <property type="match status" value="1"/>
</dbReference>
<dbReference type="PRINTS" id="PR01100">
    <property type="entry name" value="SHIKIMTKNASE"/>
</dbReference>
<dbReference type="SUPFAM" id="SSF52540">
    <property type="entry name" value="P-loop containing nucleoside triphosphate hydrolases"/>
    <property type="match status" value="1"/>
</dbReference>
<dbReference type="PROSITE" id="PS01128">
    <property type="entry name" value="SHIKIMATE_KINASE"/>
    <property type="match status" value="1"/>
</dbReference>
<protein>
    <recommendedName>
        <fullName evidence="1">Shikimate kinase</fullName>
        <shortName evidence="1">SK</shortName>
        <ecNumber evidence="1">2.7.1.71</ecNumber>
    </recommendedName>
</protein>